<feature type="chain" id="PRO_0000453345" description="4-hydroxy-4-methyl-2-oxoglutarate aldolase cghB">
    <location>
        <begin position="1"/>
        <end position="269"/>
    </location>
</feature>
<feature type="active site" description="Proton acceptor" evidence="1">
    <location>
        <position position="48"/>
    </location>
</feature>
<feature type="binding site" evidence="1">
    <location>
        <position position="155"/>
    </location>
    <ligand>
        <name>a divalent metal cation</name>
        <dbReference type="ChEBI" id="CHEBI:60240"/>
    </ligand>
</feature>
<feature type="binding site" evidence="1">
    <location>
        <position position="181"/>
    </location>
    <ligand>
        <name>a divalent metal cation</name>
        <dbReference type="ChEBI" id="CHEBI:60240"/>
    </ligand>
</feature>
<feature type="binding site" evidence="1">
    <location>
        <position position="181"/>
    </location>
    <ligand>
        <name>substrate</name>
    </ligand>
</feature>
<feature type="site" description="Transition state stabilizer" evidence="1">
    <location>
        <position position="73"/>
    </location>
</feature>
<feature type="site" description="Increases basicity of active site His" evidence="1">
    <location>
        <position position="88"/>
    </location>
</feature>
<sequence length="269" mass="28272">MASFNNVLTKAAAGRLCKAMGVRMVANPLVVQLAANAGFEALFIDLEHSTLSLADASAIACAGLLSGLTPLVRVPYQCGIGFVQQALDGGAMGIVFPHIHTAADARAAVQTCKFPPLGVRSMWGQQPALGMRVTAIGRIVEVCNAAASSVIVMIEAASSIENIEAIAAVEGVDVLLVGCLDLSTDMGMPGRFETRAFRTALEKVSAACRHSGKTMGLAGIYNNRELHEWAINTLNVRFMLCQQDSNLLAMAAVDCASAVAKIDRARLLN</sequence>
<reference key="1">
    <citation type="journal article" date="2015" name="Genome Announc.">
        <title>Draft genome sequence of the cellulolytic fungus Chaetomium globosum.</title>
        <authorList>
            <person name="Cuomo C.A."/>
            <person name="Untereiner W.A."/>
            <person name="Ma L.-J."/>
            <person name="Grabherr M."/>
            <person name="Birren B.W."/>
        </authorList>
    </citation>
    <scope>NUCLEOTIDE SEQUENCE [LARGE SCALE GENOMIC DNA]</scope>
    <source>
        <strain>ATCC 6205 / CBS 148.51 / DSM 1962 / NBRC 6347 / NRRL 1970</strain>
    </source>
</reference>
<reference key="2">
    <citation type="journal article" date="2015" name="ChemBioChem">
        <title>Involvement of lipocalin-like CghA in decalin-forming stereoselective intramolecular [4+2] cycloaddition.</title>
        <authorList>
            <person name="Sato M."/>
            <person name="Yagishita F."/>
            <person name="Mino T."/>
            <person name="Uchiyama N."/>
            <person name="Patel A."/>
            <person name="Chooi Y.H."/>
            <person name="Goda Y."/>
            <person name="Xu W."/>
            <person name="Noguchi H."/>
            <person name="Yamamoto T."/>
            <person name="Hotta K."/>
            <person name="Houk K.N."/>
            <person name="Tang Y."/>
            <person name="Watanabe K."/>
        </authorList>
    </citation>
    <scope>FUNCTION</scope>
    <scope>CATALYTIC ACTIVITY</scope>
    <scope>PATHWAY</scope>
</reference>
<proteinExistence type="evidence at protein level"/>
<keyword id="KW-0170">Cobalt</keyword>
<keyword id="KW-0408">Iron</keyword>
<keyword id="KW-0456">Lyase</keyword>
<keyword id="KW-0460">Magnesium</keyword>
<keyword id="KW-0464">Manganese</keyword>
<keyword id="KW-0479">Metal-binding</keyword>
<keyword id="KW-1185">Reference proteome</keyword>
<keyword id="KW-0862">Zinc</keyword>
<protein>
    <recommendedName>
        <fullName evidence="3">4-hydroxy-4-methyl-2-oxoglutarate aldolase cghB</fullName>
        <ecNumber evidence="2">4.1.3.17</ecNumber>
    </recommendedName>
    <alternativeName>
        <fullName evidence="3">Sch210972 biosynthesis cluster protein B</fullName>
    </alternativeName>
</protein>
<organism>
    <name type="scientific">Chaetomium globosum (strain ATCC 6205 / CBS 148.51 / DSM 1962 / NBRC 6347 / NRRL 1970)</name>
    <name type="common">Soil fungus</name>
    <dbReference type="NCBI Taxonomy" id="306901"/>
    <lineage>
        <taxon>Eukaryota</taxon>
        <taxon>Fungi</taxon>
        <taxon>Dikarya</taxon>
        <taxon>Ascomycota</taxon>
        <taxon>Pezizomycotina</taxon>
        <taxon>Sordariomycetes</taxon>
        <taxon>Sordariomycetidae</taxon>
        <taxon>Sordariales</taxon>
        <taxon>Chaetomiaceae</taxon>
        <taxon>Chaetomium</taxon>
    </lineage>
</organism>
<evidence type="ECO:0000250" key="1">
    <source>
        <dbReference type="UniProtKB" id="Q47098"/>
    </source>
</evidence>
<evidence type="ECO:0000269" key="2">
    <source>
    </source>
</evidence>
<evidence type="ECO:0000303" key="3">
    <source>
    </source>
</evidence>
<evidence type="ECO:0000305" key="4"/>
<gene>
    <name evidence="3" type="primary">cghB</name>
    <name type="ORF">CHGG_02369</name>
</gene>
<comment type="function">
    <text evidence="2">4-hydroxy-4-methyl-2-oxoglutarate aldolase; part of the gene cluster that mediates the biosynthesis of the tetramic acid Sch210972, a potential anti-HIV fungal natural product that contains a decalin core (PubMed:26360642). The PKS module of cghG together with the enoylreductase cghC catalyze the formation of the polyketide unit which is then conjugated to 4-hydroxyl-4-methyl glutamate (HMG) by the condensation domain of the cghG NRPS module (PubMed:26360642). One unique structural feature of Sch210972 is the tetramic acid motif proposed to be derived from the non-proteinogenic amino acid HMG, by a Dieckmann-type condensation catalyzed by the reductase domain of cghG (PubMed:26360642). The aldolase cghB catalyzes the aldol condensation of 2 molecules of pyruvic acid to yield the intermediate 4-hydroxyl-4-methyl-2-oxoglutarate (HMOG), which can then be stereoselectively transaminated by an unidentified enzyme to form HMG (PubMed:26360642). The Diels-Alderase cghA then uses the Dieckmann product released by cghG as substrate and catalyzes the Diels-Alder cycloaddition to form the decalin ring of Sch210972 (PubMed:26360642). CghA also suppresses the nonenzymatic formation of the alternative stereoisomer (PubMed:26360642).</text>
</comment>
<comment type="catalytic activity">
    <reaction evidence="2">
        <text>4-hydroxy-4-methyl-2-oxoglutarate = 2 pyruvate</text>
        <dbReference type="Rhea" id="RHEA:22748"/>
        <dbReference type="ChEBI" id="CHEBI:15361"/>
        <dbReference type="ChEBI" id="CHEBI:58276"/>
        <dbReference type="EC" id="4.1.3.17"/>
    </reaction>
    <physiologicalReaction direction="right-to-left" evidence="2">
        <dbReference type="Rhea" id="RHEA:22750"/>
    </physiologicalReaction>
</comment>
<comment type="cofactor">
    <cofactor evidence="1">
        <name>Co(2+)</name>
        <dbReference type="ChEBI" id="CHEBI:48828"/>
    </cofactor>
    <cofactor evidence="1">
        <name>Mn(2+)</name>
        <dbReference type="ChEBI" id="CHEBI:29035"/>
    </cofactor>
    <cofactor evidence="1">
        <name>Zn(2+)</name>
        <dbReference type="ChEBI" id="CHEBI:29105"/>
    </cofactor>
    <cofactor evidence="1">
        <name>Fe(2+)</name>
        <dbReference type="ChEBI" id="CHEBI:29033"/>
    </cofactor>
    <cofactor evidence="1">
        <name>Mg(2+)</name>
        <dbReference type="ChEBI" id="CHEBI:18420"/>
    </cofactor>
    <text evidence="1">Binds 1 divalent metal cation per subunit.</text>
</comment>
<comment type="pathway">
    <text evidence="2">Secondary metabolite biosynthesis.</text>
</comment>
<comment type="subunit">
    <text evidence="1">Homohexamer; trimer of dimers.</text>
</comment>
<comment type="similarity">
    <text evidence="4">Belongs to the HpcH/HpaI aldolase family.</text>
</comment>
<dbReference type="EC" id="4.1.3.17" evidence="2"/>
<dbReference type="EMBL" id="CH408030">
    <property type="protein sequence ID" value="EAQ90434.1"/>
    <property type="molecule type" value="Genomic_DNA"/>
</dbReference>
<dbReference type="RefSeq" id="XP_001228885.1">
    <property type="nucleotide sequence ID" value="XM_001228884.1"/>
</dbReference>
<dbReference type="SMR" id="Q2HBN5"/>
<dbReference type="GeneID" id="4388354"/>
<dbReference type="VEuPathDB" id="FungiDB:CHGG_02369"/>
<dbReference type="eggNOG" id="ENOG502SJZ2">
    <property type="taxonomic scope" value="Eukaryota"/>
</dbReference>
<dbReference type="HOGENOM" id="CLU_059964_4_0_1"/>
<dbReference type="InParanoid" id="Q2HBN5"/>
<dbReference type="OMA" id="EHVLINP"/>
<dbReference type="OrthoDB" id="2326446at2759"/>
<dbReference type="Proteomes" id="UP000001056">
    <property type="component" value="Unassembled WGS sequence"/>
</dbReference>
<dbReference type="GO" id="GO:0005737">
    <property type="term" value="C:cytoplasm"/>
    <property type="evidence" value="ECO:0007669"/>
    <property type="project" value="TreeGrafter"/>
</dbReference>
<dbReference type="GO" id="GO:0016832">
    <property type="term" value="F:aldehyde-lyase activity"/>
    <property type="evidence" value="ECO:0007669"/>
    <property type="project" value="TreeGrafter"/>
</dbReference>
<dbReference type="GO" id="GO:0046872">
    <property type="term" value="F:metal ion binding"/>
    <property type="evidence" value="ECO:0007669"/>
    <property type="project" value="UniProtKB-KW"/>
</dbReference>
<dbReference type="Gene3D" id="3.20.20.60">
    <property type="entry name" value="Phosphoenolpyruvate-binding domains"/>
    <property type="match status" value="1"/>
</dbReference>
<dbReference type="InterPro" id="IPR005000">
    <property type="entry name" value="Aldolase/citrate-lyase_domain"/>
</dbReference>
<dbReference type="InterPro" id="IPR050251">
    <property type="entry name" value="HpcH-HpaI_aldolase"/>
</dbReference>
<dbReference type="InterPro" id="IPR015813">
    <property type="entry name" value="Pyrv/PenolPyrv_kinase-like_dom"/>
</dbReference>
<dbReference type="InterPro" id="IPR040442">
    <property type="entry name" value="Pyrv_kinase-like_dom_sf"/>
</dbReference>
<dbReference type="PANTHER" id="PTHR30502">
    <property type="entry name" value="2-KETO-3-DEOXY-L-RHAMNONATE ALDOLASE"/>
    <property type="match status" value="1"/>
</dbReference>
<dbReference type="PANTHER" id="PTHR30502:SF0">
    <property type="entry name" value="PHOSPHOENOLPYRUVATE CARBOXYLASE FAMILY PROTEIN"/>
    <property type="match status" value="1"/>
</dbReference>
<dbReference type="Pfam" id="PF03328">
    <property type="entry name" value="HpcH_HpaI"/>
    <property type="match status" value="1"/>
</dbReference>
<dbReference type="SUPFAM" id="SSF51621">
    <property type="entry name" value="Phosphoenolpyruvate/pyruvate domain"/>
    <property type="match status" value="1"/>
</dbReference>
<name>CGHB_CHAGB</name>
<accession>Q2HBN5</accession>